<name>AAEB_YERPE</name>
<accession>Q8ZAU8</accession>
<accession>Q0WAW8</accession>
<accession>Q74PP1</accession>
<accession>Q7CL76</accession>
<reference key="1">
    <citation type="journal article" date="2001" name="Nature">
        <title>Genome sequence of Yersinia pestis, the causative agent of plague.</title>
        <authorList>
            <person name="Parkhill J."/>
            <person name="Wren B.W."/>
            <person name="Thomson N.R."/>
            <person name="Titball R.W."/>
            <person name="Holden M.T.G."/>
            <person name="Prentice M.B."/>
            <person name="Sebaihia M."/>
            <person name="James K.D."/>
            <person name="Churcher C.M."/>
            <person name="Mungall K.L."/>
            <person name="Baker S."/>
            <person name="Basham D."/>
            <person name="Bentley S.D."/>
            <person name="Brooks K."/>
            <person name="Cerdeno-Tarraga A.-M."/>
            <person name="Chillingworth T."/>
            <person name="Cronin A."/>
            <person name="Davies R.M."/>
            <person name="Davis P."/>
            <person name="Dougan G."/>
            <person name="Feltwell T."/>
            <person name="Hamlin N."/>
            <person name="Holroyd S."/>
            <person name="Jagels K."/>
            <person name="Karlyshev A.V."/>
            <person name="Leather S."/>
            <person name="Moule S."/>
            <person name="Oyston P.C.F."/>
            <person name="Quail M.A."/>
            <person name="Rutherford K.M."/>
            <person name="Simmonds M."/>
            <person name="Skelton J."/>
            <person name="Stevens K."/>
            <person name="Whitehead S."/>
            <person name="Barrell B.G."/>
        </authorList>
    </citation>
    <scope>NUCLEOTIDE SEQUENCE [LARGE SCALE GENOMIC DNA]</scope>
    <source>
        <strain>CO-92 / Biovar Orientalis</strain>
    </source>
</reference>
<reference key="2">
    <citation type="journal article" date="2002" name="J. Bacteriol.">
        <title>Genome sequence of Yersinia pestis KIM.</title>
        <authorList>
            <person name="Deng W."/>
            <person name="Burland V."/>
            <person name="Plunkett G. III"/>
            <person name="Boutin A."/>
            <person name="Mayhew G.F."/>
            <person name="Liss P."/>
            <person name="Perna N.T."/>
            <person name="Rose D.J."/>
            <person name="Mau B."/>
            <person name="Zhou S."/>
            <person name="Schwartz D.C."/>
            <person name="Fetherston J.D."/>
            <person name="Lindler L.E."/>
            <person name="Brubaker R.R."/>
            <person name="Plano G.V."/>
            <person name="Straley S.C."/>
            <person name="McDonough K.A."/>
            <person name="Nilles M.L."/>
            <person name="Matson J.S."/>
            <person name="Blattner F.R."/>
            <person name="Perry R.D."/>
        </authorList>
    </citation>
    <scope>NUCLEOTIDE SEQUENCE [LARGE SCALE GENOMIC DNA]</scope>
    <source>
        <strain>KIM10+ / Biovar Mediaevalis</strain>
    </source>
</reference>
<reference key="3">
    <citation type="journal article" date="2004" name="DNA Res.">
        <title>Complete genome sequence of Yersinia pestis strain 91001, an isolate avirulent to humans.</title>
        <authorList>
            <person name="Song Y."/>
            <person name="Tong Z."/>
            <person name="Wang J."/>
            <person name="Wang L."/>
            <person name="Guo Z."/>
            <person name="Han Y."/>
            <person name="Zhang J."/>
            <person name="Pei D."/>
            <person name="Zhou D."/>
            <person name="Qin H."/>
            <person name="Pang X."/>
            <person name="Han Y."/>
            <person name="Zhai J."/>
            <person name="Li M."/>
            <person name="Cui B."/>
            <person name="Qi Z."/>
            <person name="Jin L."/>
            <person name="Dai R."/>
            <person name="Chen F."/>
            <person name="Li S."/>
            <person name="Ye C."/>
            <person name="Du Z."/>
            <person name="Lin W."/>
            <person name="Wang J."/>
            <person name="Yu J."/>
            <person name="Yang H."/>
            <person name="Wang J."/>
            <person name="Huang P."/>
            <person name="Yang R."/>
        </authorList>
    </citation>
    <scope>NUCLEOTIDE SEQUENCE [LARGE SCALE GENOMIC DNA]</scope>
    <source>
        <strain>91001 / Biovar Mediaevalis</strain>
    </source>
</reference>
<evidence type="ECO:0000255" key="1">
    <source>
        <dbReference type="HAMAP-Rule" id="MF_01545"/>
    </source>
</evidence>
<dbReference type="EMBL" id="AL590842">
    <property type="protein sequence ID" value="CAL22274.1"/>
    <property type="molecule type" value="Genomic_DNA"/>
</dbReference>
<dbReference type="EMBL" id="AE009952">
    <property type="protein sequence ID" value="AAM83771.1"/>
    <property type="molecule type" value="Genomic_DNA"/>
</dbReference>
<dbReference type="EMBL" id="AE017042">
    <property type="protein sequence ID" value="AAS64002.1"/>
    <property type="molecule type" value="Genomic_DNA"/>
</dbReference>
<dbReference type="PIR" id="AG0448">
    <property type="entry name" value="AG0448"/>
</dbReference>
<dbReference type="RefSeq" id="WP_002210095.1">
    <property type="nucleotide sequence ID" value="NZ_WUCM01000032.1"/>
</dbReference>
<dbReference type="RefSeq" id="YP_002348570.1">
    <property type="nucleotide sequence ID" value="NC_003143.1"/>
</dbReference>
<dbReference type="SMR" id="Q8ZAU8"/>
<dbReference type="STRING" id="214092.YPO3686"/>
<dbReference type="PaxDb" id="214092-YPO3686"/>
<dbReference type="DNASU" id="1145124"/>
<dbReference type="EnsemblBacteria" id="AAS64002">
    <property type="protein sequence ID" value="AAS64002"/>
    <property type="gene ID" value="YP_3857"/>
</dbReference>
<dbReference type="GeneID" id="57975111"/>
<dbReference type="KEGG" id="ype:YPO3686"/>
<dbReference type="KEGG" id="ypk:y0177"/>
<dbReference type="KEGG" id="ypm:YP_3857"/>
<dbReference type="PATRIC" id="fig|214092.21.peg.4193"/>
<dbReference type="eggNOG" id="COG1289">
    <property type="taxonomic scope" value="Bacteria"/>
</dbReference>
<dbReference type="HOGENOM" id="CLU_027647_0_0_6"/>
<dbReference type="OMA" id="RCTEICL"/>
<dbReference type="OrthoDB" id="9807111at2"/>
<dbReference type="Proteomes" id="UP000000815">
    <property type="component" value="Chromosome"/>
</dbReference>
<dbReference type="Proteomes" id="UP000001019">
    <property type="component" value="Chromosome"/>
</dbReference>
<dbReference type="Proteomes" id="UP000002490">
    <property type="component" value="Chromosome"/>
</dbReference>
<dbReference type="GO" id="GO:0005886">
    <property type="term" value="C:plasma membrane"/>
    <property type="evidence" value="ECO:0000318"/>
    <property type="project" value="GO_Central"/>
</dbReference>
<dbReference type="GO" id="GO:0022857">
    <property type="term" value="F:transmembrane transporter activity"/>
    <property type="evidence" value="ECO:0007669"/>
    <property type="project" value="UniProtKB-UniRule"/>
</dbReference>
<dbReference type="GO" id="GO:0046942">
    <property type="term" value="P:carboxylic acid transport"/>
    <property type="evidence" value="ECO:0007669"/>
    <property type="project" value="InterPro"/>
</dbReference>
<dbReference type="HAMAP" id="MF_01545">
    <property type="entry name" value="AaeB"/>
    <property type="match status" value="1"/>
</dbReference>
<dbReference type="InterPro" id="IPR006726">
    <property type="entry name" value="PHBA_efflux_AaeB/fusaric-R"/>
</dbReference>
<dbReference type="InterPro" id="IPR023706">
    <property type="entry name" value="PHBA_efflux_pump_AaeB"/>
</dbReference>
<dbReference type="NCBIfam" id="NF007916">
    <property type="entry name" value="PRK10631.1"/>
    <property type="match status" value="1"/>
</dbReference>
<dbReference type="PANTHER" id="PTHR30509:SF9">
    <property type="entry name" value="MULTIDRUG RESISTANCE PROTEIN MDTO"/>
    <property type="match status" value="1"/>
</dbReference>
<dbReference type="PANTHER" id="PTHR30509">
    <property type="entry name" value="P-HYDROXYBENZOIC ACID EFFLUX PUMP SUBUNIT-RELATED"/>
    <property type="match status" value="1"/>
</dbReference>
<dbReference type="Pfam" id="PF04632">
    <property type="entry name" value="FUSC"/>
    <property type="match status" value="1"/>
</dbReference>
<keyword id="KW-0997">Cell inner membrane</keyword>
<keyword id="KW-1003">Cell membrane</keyword>
<keyword id="KW-0472">Membrane</keyword>
<keyword id="KW-1185">Reference proteome</keyword>
<keyword id="KW-0812">Transmembrane</keyword>
<keyword id="KW-1133">Transmembrane helix</keyword>
<keyword id="KW-0813">Transport</keyword>
<organism>
    <name type="scientific">Yersinia pestis</name>
    <dbReference type="NCBI Taxonomy" id="632"/>
    <lineage>
        <taxon>Bacteria</taxon>
        <taxon>Pseudomonadati</taxon>
        <taxon>Pseudomonadota</taxon>
        <taxon>Gammaproteobacteria</taxon>
        <taxon>Enterobacterales</taxon>
        <taxon>Yersiniaceae</taxon>
        <taxon>Yersinia</taxon>
    </lineage>
</organism>
<proteinExistence type="inferred from homology"/>
<feature type="chain" id="PRO_0000210086" description="p-hydroxybenzoic acid efflux pump subunit AaeB">
    <location>
        <begin position="1"/>
        <end position="651"/>
    </location>
</feature>
<feature type="transmembrane region" description="Helical" evidence="1">
    <location>
        <begin position="11"/>
        <end position="31"/>
    </location>
</feature>
<feature type="transmembrane region" description="Helical" evidence="1">
    <location>
        <begin position="41"/>
        <end position="61"/>
    </location>
</feature>
<feature type="transmembrane region" description="Helical" evidence="1">
    <location>
        <begin position="67"/>
        <end position="87"/>
    </location>
</feature>
<feature type="transmembrane region" description="Helical" evidence="1">
    <location>
        <begin position="91"/>
        <end position="111"/>
    </location>
</feature>
<feature type="transmembrane region" description="Helical" evidence="1">
    <location>
        <begin position="119"/>
        <end position="139"/>
    </location>
</feature>
<feature type="transmembrane region" description="Helical" evidence="1">
    <location>
        <begin position="150"/>
        <end position="170"/>
    </location>
</feature>
<feature type="transmembrane region" description="Helical" evidence="1">
    <location>
        <begin position="368"/>
        <end position="388"/>
    </location>
</feature>
<feature type="transmembrane region" description="Helical" evidence="1">
    <location>
        <begin position="405"/>
        <end position="425"/>
    </location>
</feature>
<feature type="transmembrane region" description="Helical" evidence="1">
    <location>
        <begin position="429"/>
        <end position="449"/>
    </location>
</feature>
<feature type="transmembrane region" description="Helical" evidence="1">
    <location>
        <begin position="455"/>
        <end position="475"/>
    </location>
</feature>
<feature type="transmembrane region" description="Helical" evidence="1">
    <location>
        <begin position="481"/>
        <end position="501"/>
    </location>
</feature>
<sequence length="651" mass="72437">MTHPSFIRLRFAFKLSFAIVAALFLGFHLQLETPRWSVLTAAIVSAGPAFAAGGEPFSGAIRHRGWLRIIGTFIGCIGGLVIIVLTIRAPVLTLMLCCLWAGICTWISSLVRVENSYAFGLAGYTALIIIVTTGETPLLTPQFAVERCSEIVLGIVCAVMADLLFSPRSIKQDIDRLVDKVLVDQYRLLQLCIQPAEKSEIDRAWNELVKNTTSLNGMRSYLMMESSRWQRCNRRLQVLHTESLALITQACETYLVMSNHPEVISAELKTMLSEPAQTPAEIHQQMKKLRQFIAASHSEAIPHTISSWVGAATRYLLLSKGIQTNSSINQVEEDILAGDAPVKPISAEGHHAMINGLRTGIATAIGGLFWLWTGWTSGAGCMVMIAVVTSLAMRTPNPRRMALDFLVGVIIALPIGALYFMFIIPSTQQSMLLLCISLGVLAFIIGIEVQKRRLGSLGTLASTINIIVLSNPMIFNVRQFLDSALGQIVGCFVSLIVLLLIRDNAKDRTGRTLLNRFVYSAVSALTTNKTKRGENHLPALYQQLNQLLMMFPADIDKYRLALTLIIAHQRLNRTEIPVNAELSAFHKQIRSTAERVITVNNDQKRRYYFARLLQELDQYQQKLVDYQAADAVIRPVKRLTEMLRKYQSALI</sequence>
<comment type="function">
    <text evidence="1">Forms an efflux pump with AaeA. Could function as a metabolic relief valve, allowing to eliminate certain compounds when they accumulate to high levels in the cell.</text>
</comment>
<comment type="subcellular location">
    <subcellularLocation>
        <location evidence="1">Cell inner membrane</location>
        <topology evidence="1">Multi-pass membrane protein</topology>
    </subcellularLocation>
</comment>
<comment type="similarity">
    <text evidence="1">Belongs to the aromatic acid exporter ArAE (TC 2.A.85) family.</text>
</comment>
<gene>
    <name evidence="1" type="primary">aaeB</name>
    <name type="ordered locus">YPO3686</name>
    <name type="ordered locus">y0177</name>
    <name type="ordered locus">YP_3857</name>
</gene>
<protein>
    <recommendedName>
        <fullName evidence="1">p-hydroxybenzoic acid efflux pump subunit AaeB</fullName>
        <shortName evidence="1">pHBA efflux pump protein B</shortName>
    </recommendedName>
</protein>